<sequence>MQPKVPQLRRREGLGEEQEKGARGGEGNARTHGTPDLVQWTRHMEAVKTQFLEQAQRELAELLDRALWEAMQAYPKQDRPLPSAAPDSTSKTQELHPGKRKVFITRKSLIDELMEVQHFRTIYHMFIAGLCVLIISTLAIDFIDEGRLMLEFDLLLFSFGQLPLALMTWVPMFLSTLLVPYQTLWLWARPRAGGAWMLGASLGCVLLAAHAVVLCVLPVHVSVRHELPPASRCVLVFEQVRLLMKSYSFLRETVPGIFCVRGGKGISPPSFSSYLYFLFCPTLIYRETYPRTPSIRWNYVAKNFAQVLGCLLYACFILGRLCVPVFANMSREPFSTRALLLSILHATGPGIFMLLLIFFAFLHCWLNAFAEMLRFGDRMFYRDWWNSTSFSNYYRTWNVVVHDWLYSYVYQDGLWLLGRRARGVAMLGVFLVSAVVHEYIFCFVLGFFYPVMLMLFLVFGGLLNFTMNDRHTGPAWNILMWTFLFMGQGIQVSLYCQEWYARRHCPLPQTTFWGMVTPRSWSCHP</sequence>
<accession>O88908</accession>
<accession>Q8R0Y9</accession>
<protein>
    <recommendedName>
        <fullName evidence="7">Sterol O-acyltransferase 2</fullName>
        <ecNumber evidence="1">2.3.1.26</ecNumber>
    </recommendedName>
    <alternativeName>
        <fullName>Acyl-coenzyme A:cholesterol acyltransferase 2</fullName>
        <shortName>ACAT-2</shortName>
    </alternativeName>
    <alternativeName>
        <fullName>Cholesterol acyltransferase 2</fullName>
    </alternativeName>
</protein>
<feature type="chain" id="PRO_0000207646" description="Sterol O-acyltransferase 2">
    <location>
        <begin position="1"/>
        <end position="525"/>
    </location>
</feature>
<feature type="topological domain" description="Cytoplasmic" evidence="7">
    <location>
        <begin position="1"/>
        <end position="119"/>
    </location>
</feature>
<feature type="transmembrane region" description="Helical; Name=1" evidence="2">
    <location>
        <begin position="120"/>
        <end position="141"/>
    </location>
</feature>
<feature type="topological domain" description="Lumenal" evidence="7">
    <location>
        <begin position="142"/>
        <end position="161"/>
    </location>
</feature>
<feature type="transmembrane region" description="Helical; Name=2" evidence="2">
    <location>
        <begin position="162"/>
        <end position="187"/>
    </location>
</feature>
<feature type="topological domain" description="Cytoplasmic" evidence="7">
    <location>
        <begin position="188"/>
        <end position="199"/>
    </location>
</feature>
<feature type="transmembrane region" description="Helical; Name=3" evidence="2">
    <location>
        <begin position="200"/>
        <end position="223"/>
    </location>
</feature>
<feature type="topological domain" description="Lumenal" evidence="7">
    <location>
        <begin position="224"/>
        <end position="231"/>
    </location>
</feature>
<feature type="transmembrane region" description="Helical; Name=4" evidence="2">
    <location>
        <begin position="232"/>
        <end position="255"/>
    </location>
</feature>
<feature type="topological domain" description="Cytoplasmic" evidence="7">
    <location>
        <begin position="256"/>
        <end position="296"/>
    </location>
</feature>
<feature type="transmembrane region" description="Helical; Name=5" evidence="2">
    <location>
        <begin position="297"/>
        <end position="329"/>
    </location>
</feature>
<feature type="topological domain" description="Lumenal" evidence="7">
    <location>
        <begin position="330"/>
        <end position="346"/>
    </location>
</feature>
<feature type="transmembrane region" description="Helical; Name=6" evidence="2">
    <location>
        <begin position="347"/>
        <end position="372"/>
    </location>
</feature>
<feature type="topological domain" description="Cytoplasmic" evidence="7">
    <location>
        <begin position="373"/>
        <end position="420"/>
    </location>
</feature>
<feature type="transmembrane region" description="Helical; Name=7" evidence="2">
    <location>
        <begin position="421"/>
        <end position="445"/>
    </location>
</feature>
<feature type="topological domain" description="Lumenal" evidence="7">
    <location>
        <begin position="446"/>
        <end position="451"/>
    </location>
</feature>
<feature type="transmembrane region" description="Helical; Name=8" evidence="2">
    <location>
        <begin position="452"/>
        <end position="467"/>
    </location>
</feature>
<feature type="topological domain" description="Cytoplasmic" evidence="7">
    <location>
        <begin position="468"/>
        <end position="473"/>
    </location>
</feature>
<feature type="transmembrane region" description="Helical; Name=9" evidence="2">
    <location>
        <begin position="474"/>
        <end position="505"/>
    </location>
</feature>
<feature type="topological domain" description="Lumenal" evidence="7">
    <location>
        <begin position="506"/>
        <end position="525"/>
    </location>
</feature>
<feature type="region of interest" description="Disordered" evidence="4">
    <location>
        <begin position="1"/>
        <end position="34"/>
    </location>
</feature>
<feature type="region of interest" description="Disordered" evidence="4">
    <location>
        <begin position="77"/>
        <end position="97"/>
    </location>
</feature>
<feature type="short sequence motif" description="FYXDWWN motif" evidence="2">
    <location>
        <begin position="380"/>
        <end position="386"/>
    </location>
</feature>
<feature type="compositionally biased region" description="Basic and acidic residues" evidence="4">
    <location>
        <begin position="9"/>
        <end position="23"/>
    </location>
</feature>
<feature type="active site" evidence="2">
    <location>
        <position position="437"/>
    </location>
</feature>
<feature type="binding site" evidence="2">
    <location>
        <position position="118"/>
    </location>
    <ligand>
        <name>cholesterol</name>
        <dbReference type="ChEBI" id="CHEBI:16113"/>
    </ligand>
</feature>
<feature type="binding site" evidence="2">
    <location>
        <position position="392"/>
    </location>
    <ligand>
        <name>an acyl-CoA</name>
        <dbReference type="ChEBI" id="CHEBI:58342"/>
    </ligand>
</feature>
<feature type="binding site" evidence="2">
    <location>
        <position position="395"/>
    </location>
    <ligand>
        <name>an acyl-CoA</name>
        <dbReference type="ChEBI" id="CHEBI:58342"/>
    </ligand>
</feature>
<feature type="binding site" evidence="2">
    <location>
        <position position="398"/>
    </location>
    <ligand>
        <name>an acyl-CoA</name>
        <dbReference type="ChEBI" id="CHEBI:58342"/>
    </ligand>
</feature>
<feature type="binding site" evidence="2">
    <location>
        <position position="402"/>
    </location>
    <ligand>
        <name>an acyl-CoA</name>
        <dbReference type="ChEBI" id="CHEBI:58342"/>
    </ligand>
</feature>
<feature type="binding site" evidence="2">
    <location>
        <position position="410"/>
    </location>
    <ligand>
        <name>an acyl-CoA</name>
        <dbReference type="ChEBI" id="CHEBI:58342"/>
    </ligand>
</feature>
<feature type="binding site" evidence="2">
    <location>
        <position position="433"/>
    </location>
    <ligand>
        <name>an acyl-CoA</name>
        <dbReference type="ChEBI" id="CHEBI:58342"/>
    </ligand>
</feature>
<feature type="modified residue" description="Cysteine sulfenic acid (-SOH); alternate" evidence="1">
    <location>
        <position position="280"/>
    </location>
</feature>
<feature type="cross-link" description="Glycyl cysteine thioester (Cys-Gly) (interchain with G-Cter in ubiquitin); alternate" evidence="1">
    <location>
        <position position="280"/>
    </location>
</feature>
<feature type="sequence conflict" description="In Ref. 1; AAC64057." evidence="7" ref="1">
    <original>Q</original>
    <variation>P</variation>
    <location>
        <position position="93"/>
    </location>
</feature>
<feature type="sequence conflict" description="In Ref. 1; AAC64057." evidence="7" ref="1">
    <original>H</original>
    <variation>R</variation>
    <location>
        <position position="96"/>
    </location>
</feature>
<feature type="sequence conflict" description="In Ref. 1; AAC64057." evidence="7" ref="1">
    <original>IT</original>
    <variation>VA</variation>
    <location>
        <begin position="104"/>
        <end position="105"/>
    </location>
</feature>
<feature type="sequence conflict" description="In Ref. 1; AAC64057." evidence="7" ref="1">
    <original>CV</original>
    <variation>WF</variation>
    <location>
        <begin position="131"/>
        <end position="132"/>
    </location>
</feature>
<feature type="sequence conflict" description="In Ref. 1; AAC64057." evidence="7" ref="1">
    <original>S</original>
    <variation>Y</variation>
    <location>
        <position position="175"/>
    </location>
</feature>
<feature type="sequence conflict" description="In Ref. 1; AAC64057." evidence="7" ref="1">
    <original>G</original>
    <variation>R</variation>
    <location>
        <position position="262"/>
    </location>
</feature>
<feature type="sequence conflict" description="In Ref. 1; AAC64057." evidence="7" ref="1">
    <original>R</original>
    <variation>Q</variation>
    <location>
        <position position="519"/>
    </location>
</feature>
<feature type="sequence conflict" description="In Ref. 1; AAC64057." evidence="7" ref="1">
    <original>P</original>
    <variation>T</variation>
    <location>
        <position position="525"/>
    </location>
</feature>
<keyword id="KW-0012">Acyltransferase</keyword>
<keyword id="KW-0153">Cholesterol metabolism</keyword>
<keyword id="KW-0256">Endoplasmic reticulum</keyword>
<keyword id="KW-0443">Lipid metabolism</keyword>
<keyword id="KW-0472">Membrane</keyword>
<keyword id="KW-0558">Oxidation</keyword>
<keyword id="KW-1185">Reference proteome</keyword>
<keyword id="KW-0753">Steroid metabolism</keyword>
<keyword id="KW-1207">Sterol metabolism</keyword>
<keyword id="KW-0882">Thioester bond</keyword>
<keyword id="KW-0808">Transferase</keyword>
<keyword id="KW-0812">Transmembrane</keyword>
<keyword id="KW-1133">Transmembrane helix</keyword>
<keyword id="KW-0832">Ubl conjugation</keyword>
<reference key="1">
    <citation type="journal article" date="1998" name="J. Biol. Chem.">
        <title>ACAT-2, a second mammalian acyl-CoA:cholesterol acyltransferase. Its cloning, expression, and characterization.</title>
        <authorList>
            <person name="Cases S."/>
            <person name="Novak S."/>
            <person name="Zheng Y.-W."/>
            <person name="Myers H.M."/>
            <person name="Lear S.R."/>
            <person name="Sande E."/>
            <person name="Welch C.B."/>
            <person name="Lusis A.J."/>
            <person name="Spencer T.A."/>
            <person name="Krause B.R."/>
            <person name="Erickson S.K."/>
            <person name="Farese R.V. Jr."/>
        </authorList>
    </citation>
    <scope>NUCLEOTIDE SEQUENCE [MRNA]</scope>
    <source>
        <strain>C57BL/6J</strain>
    </source>
</reference>
<reference key="2">
    <citation type="submission" date="2005-09" db="EMBL/GenBank/DDBJ databases">
        <authorList>
            <person name="Mural R.J."/>
            <person name="Adams M.D."/>
            <person name="Myers E.W."/>
            <person name="Smith H.O."/>
            <person name="Venter J.C."/>
        </authorList>
    </citation>
    <scope>NUCLEOTIDE SEQUENCE [LARGE SCALE GENOMIC DNA]</scope>
</reference>
<reference key="3">
    <citation type="journal article" date="2004" name="Genome Res.">
        <title>The status, quality, and expansion of the NIH full-length cDNA project: the Mammalian Gene Collection (MGC).</title>
        <authorList>
            <consortium name="The MGC Project Team"/>
        </authorList>
    </citation>
    <scope>NUCLEOTIDE SEQUENCE [LARGE SCALE MRNA]</scope>
    <source>
        <strain>FVB/N</strain>
        <tissue>Liver</tissue>
    </source>
</reference>
<reference key="4">
    <citation type="journal article" date="2000" name="Mol. Biol. Cell">
        <title>ACAT1 and ACAT2 membrane topology segregates a serine residue essential for activity to opposite sides of the endoplasmic reticulum membrane.</title>
        <authorList>
            <person name="Joyce C.W."/>
            <person name="Shelness G.S."/>
            <person name="Davis M.A."/>
            <person name="Lee R.G."/>
            <person name="Skinner K."/>
            <person name="Anderson R.A."/>
            <person name="Rudel L.L."/>
        </authorList>
    </citation>
    <scope>TOPOLOGY</scope>
    <scope>SUBCELLULAR LOCATION</scope>
</reference>
<reference key="5">
    <citation type="journal article" date="2010" name="Cell">
        <title>A tissue-specific atlas of mouse protein phosphorylation and expression.</title>
        <authorList>
            <person name="Huttlin E.L."/>
            <person name="Jedrychowski M.P."/>
            <person name="Elias J.E."/>
            <person name="Goswami T."/>
            <person name="Rad R."/>
            <person name="Beausoleil S.A."/>
            <person name="Villen J."/>
            <person name="Haas W."/>
            <person name="Sowa M.E."/>
            <person name="Gygi S.P."/>
        </authorList>
    </citation>
    <scope>IDENTIFICATION BY MASS SPECTROMETRY [LARGE SCALE ANALYSIS]</scope>
    <source>
        <tissue>Liver</tissue>
    </source>
</reference>
<reference key="6">
    <citation type="journal article" date="2017" name="Nat. Cell Biol.">
        <title>Cholesterol and fatty acids regulate cysteine ubiquitylation of ACAT2 through competitive oxidation.</title>
        <authorList>
            <person name="Wang Y.J."/>
            <person name="Bian Y."/>
            <person name="Luo J."/>
            <person name="Lu M."/>
            <person name="Xiong Y."/>
            <person name="Guo S.Y."/>
            <person name="Yin H.Y."/>
            <person name="Lin X."/>
            <person name="Li Q."/>
            <person name="Chang C.C.Y."/>
            <person name="Chang T.Y."/>
            <person name="Li B.L."/>
            <person name="Song B.L."/>
        </authorList>
    </citation>
    <scope>DISRUPTION PHENOTYPE</scope>
</reference>
<reference key="7">
    <citation type="journal article" date="2017" name="Nat. Cell Biol.">
        <title>Corrigendum: Cholesterol and fatty acids regulate cysteine ubiquitylation of ACAT2 through competitive oxidation.</title>
        <authorList>
            <person name="Wang Y.J."/>
            <person name="Bian Y."/>
            <person name="Luo J."/>
            <person name="Lu M."/>
            <person name="Xiong Y."/>
            <person name="Guo S.Y."/>
            <person name="Yong H."/>
            <person name="Lin X."/>
            <person name="Li Q."/>
            <person name="Chang C.C.Y."/>
            <person name="Chang T.Y."/>
            <person name="Li B.L."/>
            <person name="Song B.L."/>
        </authorList>
    </citation>
    <scope>ERRATUM OF PUBMED:28604676</scope>
</reference>
<name>SOAT2_MOUSE</name>
<evidence type="ECO:0000250" key="1">
    <source>
        <dbReference type="UniProtKB" id="O75908"/>
    </source>
</evidence>
<evidence type="ECO:0000250" key="2">
    <source>
        <dbReference type="UniProtKB" id="P35610"/>
    </source>
</evidence>
<evidence type="ECO:0000255" key="3"/>
<evidence type="ECO:0000256" key="4">
    <source>
        <dbReference type="SAM" id="MobiDB-lite"/>
    </source>
</evidence>
<evidence type="ECO:0000269" key="5">
    <source>
    </source>
</evidence>
<evidence type="ECO:0000269" key="6">
    <source>
    </source>
</evidence>
<evidence type="ECO:0000305" key="7"/>
<evidence type="ECO:0000312" key="8">
    <source>
        <dbReference type="MGI" id="MGI:1332226"/>
    </source>
</evidence>
<comment type="function">
    <text evidence="1">Catalyzes the formation of fatty acid-cholesterol esters, which are less soluble in membranes than cholesterol. Plays a role in lipoprotein assembly and dietary cholesterol absorption. Utilizes oleoyl-CoA ((9Z)-octadecenoyl-CoA) and linolenoyl-CoA ((9Z,12Z,15Z)-octadecatrienoyl-CoA) as substrates. May provide cholesteryl esters for lipoprotein secretion from hepatocytes and intestinal mucosa.</text>
</comment>
<comment type="catalytic activity">
    <reaction evidence="1">
        <text>a sterol + a long-chain fatty acyl-CoA = a long-chain 3-hydroxysterol ester + CoA</text>
        <dbReference type="Rhea" id="RHEA:59816"/>
        <dbReference type="ChEBI" id="CHEBI:15889"/>
        <dbReference type="ChEBI" id="CHEBI:57287"/>
        <dbReference type="ChEBI" id="CHEBI:83139"/>
        <dbReference type="ChEBI" id="CHEBI:232093"/>
        <dbReference type="EC" id="2.3.1.26"/>
    </reaction>
    <physiologicalReaction direction="left-to-right" evidence="1">
        <dbReference type="Rhea" id="RHEA:59817"/>
    </physiologicalReaction>
</comment>
<comment type="catalytic activity">
    <reaction evidence="1">
        <text>cholesterol + an acyl-CoA = a cholesterol ester + CoA</text>
        <dbReference type="Rhea" id="RHEA:17729"/>
        <dbReference type="ChEBI" id="CHEBI:16113"/>
        <dbReference type="ChEBI" id="CHEBI:17002"/>
        <dbReference type="ChEBI" id="CHEBI:57287"/>
        <dbReference type="ChEBI" id="CHEBI:58342"/>
    </reaction>
    <physiologicalReaction direction="left-to-right" evidence="1">
        <dbReference type="Rhea" id="RHEA:17730"/>
    </physiologicalReaction>
</comment>
<comment type="catalytic activity">
    <reaction evidence="1">
        <text>cholesterol + (9Z)-octadecenoyl-CoA = cholesteryl (9Z-octadecenoate) + CoA</text>
        <dbReference type="Rhea" id="RHEA:41436"/>
        <dbReference type="ChEBI" id="CHEBI:16113"/>
        <dbReference type="ChEBI" id="CHEBI:46898"/>
        <dbReference type="ChEBI" id="CHEBI:57287"/>
        <dbReference type="ChEBI" id="CHEBI:57387"/>
    </reaction>
    <physiologicalReaction direction="left-to-right" evidence="1">
        <dbReference type="Rhea" id="RHEA:41437"/>
    </physiologicalReaction>
</comment>
<comment type="catalytic activity">
    <reaction evidence="1">
        <text>(5Z,8Z,11Z,14Z,17Z)-eicosapentaenoyl-CoA + cholesterol = (5Z,8Z,11Z,14Z,17Z-eicosapentaenoyl)-cholesterol + CoA</text>
        <dbReference type="Rhea" id="RHEA:46612"/>
        <dbReference type="ChEBI" id="CHEBI:16113"/>
        <dbReference type="ChEBI" id="CHEBI:57287"/>
        <dbReference type="ChEBI" id="CHEBI:73862"/>
        <dbReference type="ChEBI" id="CHEBI:84969"/>
    </reaction>
    <physiologicalReaction direction="left-to-right" evidence="1">
        <dbReference type="Rhea" id="RHEA:46613"/>
    </physiologicalReaction>
</comment>
<comment type="catalytic activity">
    <reaction evidence="1">
        <text>(9Z,12Z,15Z)-octadecatrienoyl-CoA + cholesterol = (9Z,12Z,15Z-octadecatrienoyl)-cholesterol + CoA</text>
        <dbReference type="Rhea" id="RHEA:46620"/>
        <dbReference type="ChEBI" id="CHEBI:16113"/>
        <dbReference type="ChEBI" id="CHEBI:57287"/>
        <dbReference type="ChEBI" id="CHEBI:74034"/>
        <dbReference type="ChEBI" id="CHEBI:84341"/>
    </reaction>
    <physiologicalReaction direction="left-to-right" evidence="1">
        <dbReference type="Rhea" id="RHEA:46621"/>
    </physiologicalReaction>
</comment>
<comment type="catalytic activity">
    <reaction evidence="1">
        <text>(5Z,8Z,11Z,14Z)-eicosatetraenoyl-CoA + cholesterol = cholesteryl (5Z,8Z,11Z,14Z)-eicosatetraenoate + CoA</text>
        <dbReference type="Rhea" id="RHEA:42816"/>
        <dbReference type="ChEBI" id="CHEBI:16113"/>
        <dbReference type="ChEBI" id="CHEBI:57287"/>
        <dbReference type="ChEBI" id="CHEBI:57368"/>
        <dbReference type="ChEBI" id="CHEBI:82751"/>
    </reaction>
    <physiologicalReaction direction="left-to-right" evidence="1">
        <dbReference type="Rhea" id="RHEA:42817"/>
    </physiologicalReaction>
</comment>
<comment type="subunit">
    <text evidence="1 2">May form homo- or heterodimers (By similarity). Interacts with INSIG1; the interaction is direct and promotes association with AMFR/gp78 (By similarity).</text>
</comment>
<comment type="subcellular location">
    <subcellularLocation>
        <location evidence="5">Endoplasmic reticulum membrane</location>
        <topology evidence="3">Multi-pass membrane protein</topology>
    </subcellularLocation>
</comment>
<comment type="domain">
    <text evidence="2">Each protomer consists of 9 transmembrane segments, which enclose a cytosolic tunnel and a transmembrane tunnel that converge at the predicted catalytic site: acyl-CoA enters the active site through the cytosolic tunnel, whereas cholesterol enters from the side through the transmembrane tunnel.</text>
</comment>
<comment type="PTM">
    <text evidence="1">Polyubiquitinated by AMFR/gp78 at Cys-280, leading to its degradation when the lipid levels are low. Association with AMFR/gp78 is mediated via interaction with INSIG1. High concentration of cholesterol and fatty acid results in Cys-280 oxidation, preventing ubiquitination at the same site, resulting in protein stabilization.</text>
</comment>
<comment type="PTM">
    <text evidence="1">Oxidized at Cys-280: high concentration of cholesterol and fatty acid induce reactive oxygen species, which oxidizes Cys-280, preventing ubiquitination at the same site, and resulting in protein stabilization.</text>
</comment>
<comment type="disruption phenotype">
    <text evidence="6">Mice are more susceptible to high-fat diet-induced insulin resistance.</text>
</comment>
<comment type="similarity">
    <text evidence="7">Belongs to the membrane-bound acyltransferase family. Sterol o-acyltransferase subfamily.</text>
</comment>
<gene>
    <name evidence="8" type="primary">Soat2</name>
    <name type="synonym">Acact-2</name>
    <name type="synonym">Acat2</name>
</gene>
<proteinExistence type="evidence at protein level"/>
<dbReference type="EC" id="2.3.1.26" evidence="1"/>
<dbReference type="EMBL" id="AF078751">
    <property type="protein sequence ID" value="AAC64057.1"/>
    <property type="molecule type" value="mRNA"/>
</dbReference>
<dbReference type="EMBL" id="CH466550">
    <property type="protein sequence ID" value="EDL04004.1"/>
    <property type="molecule type" value="Genomic_DNA"/>
</dbReference>
<dbReference type="EMBL" id="BC025931">
    <property type="protein sequence ID" value="AAH25931.1"/>
    <property type="molecule type" value="mRNA"/>
</dbReference>
<dbReference type="CCDS" id="CCDS27872.1"/>
<dbReference type="RefSeq" id="NP_666176.1">
    <property type="nucleotide sequence ID" value="NM_146064.1"/>
</dbReference>
<dbReference type="SMR" id="O88908"/>
<dbReference type="FunCoup" id="O88908">
    <property type="interactions" value="168"/>
</dbReference>
<dbReference type="STRING" id="10090.ENSMUSP00000023806"/>
<dbReference type="ChEMBL" id="CHEMBL2653"/>
<dbReference type="iPTMnet" id="O88908"/>
<dbReference type="PhosphoSitePlus" id="O88908"/>
<dbReference type="SwissPalm" id="O88908"/>
<dbReference type="jPOST" id="O88908"/>
<dbReference type="PaxDb" id="10090-ENSMUSP00000023806"/>
<dbReference type="ProteomicsDB" id="261313"/>
<dbReference type="Antibodypedia" id="43294">
    <property type="antibodies" value="142 antibodies from 20 providers"/>
</dbReference>
<dbReference type="Ensembl" id="ENSMUST00000023806.14">
    <property type="protein sequence ID" value="ENSMUSP00000023806.7"/>
    <property type="gene ID" value="ENSMUSG00000023045.14"/>
</dbReference>
<dbReference type="GeneID" id="223920"/>
<dbReference type="KEGG" id="mmu:223920"/>
<dbReference type="UCSC" id="uc007xut.1">
    <property type="organism name" value="mouse"/>
</dbReference>
<dbReference type="AGR" id="MGI:1332226"/>
<dbReference type="CTD" id="8435"/>
<dbReference type="MGI" id="MGI:1332226">
    <property type="gene designation" value="Soat2"/>
</dbReference>
<dbReference type="VEuPathDB" id="HostDB:ENSMUSG00000023045"/>
<dbReference type="eggNOG" id="KOG0380">
    <property type="taxonomic scope" value="Eukaryota"/>
</dbReference>
<dbReference type="GeneTree" id="ENSGT00950000183081"/>
<dbReference type="HOGENOM" id="CLU_031845_1_0_1"/>
<dbReference type="InParanoid" id="O88908"/>
<dbReference type="OMA" id="TMNDRHT"/>
<dbReference type="OrthoDB" id="10039049at2759"/>
<dbReference type="PhylomeDB" id="O88908"/>
<dbReference type="TreeFam" id="TF315226"/>
<dbReference type="BRENDA" id="2.3.1.26">
    <property type="organism ID" value="3474"/>
</dbReference>
<dbReference type="Reactome" id="R-MMU-8964038">
    <property type="pathway name" value="LDL clearance"/>
</dbReference>
<dbReference type="BioGRID-ORCS" id="223920">
    <property type="hits" value="6 hits in 80 CRISPR screens"/>
</dbReference>
<dbReference type="ChiTaRS" id="Soat2">
    <property type="organism name" value="mouse"/>
</dbReference>
<dbReference type="PRO" id="PR:O88908"/>
<dbReference type="Proteomes" id="UP000000589">
    <property type="component" value="Chromosome 15"/>
</dbReference>
<dbReference type="RNAct" id="O88908">
    <property type="molecule type" value="protein"/>
</dbReference>
<dbReference type="Bgee" id="ENSMUSG00000023045">
    <property type="expression patterns" value="Expressed in small intestine Peyer's patch and 61 other cell types or tissues"/>
</dbReference>
<dbReference type="ExpressionAtlas" id="O88908">
    <property type="expression patterns" value="baseline and differential"/>
</dbReference>
<dbReference type="GO" id="GO:0005903">
    <property type="term" value="C:brush border"/>
    <property type="evidence" value="ECO:0007669"/>
    <property type="project" value="Ensembl"/>
</dbReference>
<dbReference type="GO" id="GO:0005789">
    <property type="term" value="C:endoplasmic reticulum membrane"/>
    <property type="evidence" value="ECO:0007669"/>
    <property type="project" value="UniProtKB-SubCell"/>
</dbReference>
<dbReference type="GO" id="GO:0016020">
    <property type="term" value="C:membrane"/>
    <property type="evidence" value="ECO:0000314"/>
    <property type="project" value="MGI"/>
</dbReference>
<dbReference type="GO" id="GO:0015485">
    <property type="term" value="F:cholesterol binding"/>
    <property type="evidence" value="ECO:0007669"/>
    <property type="project" value="Ensembl"/>
</dbReference>
<dbReference type="GO" id="GO:0034736">
    <property type="term" value="F:cholesterol O-acyltransferase activity"/>
    <property type="evidence" value="ECO:0007669"/>
    <property type="project" value="Ensembl"/>
</dbReference>
<dbReference type="GO" id="GO:0000062">
    <property type="term" value="F:fatty-acyl-CoA binding"/>
    <property type="evidence" value="ECO:0007669"/>
    <property type="project" value="Ensembl"/>
</dbReference>
<dbReference type="GO" id="GO:0004772">
    <property type="term" value="F:sterol O-acyltransferase activity"/>
    <property type="evidence" value="ECO:0000314"/>
    <property type="project" value="MGI"/>
</dbReference>
<dbReference type="GO" id="GO:0033344">
    <property type="term" value="P:cholesterol efflux"/>
    <property type="evidence" value="ECO:0007669"/>
    <property type="project" value="Ensembl"/>
</dbReference>
<dbReference type="GO" id="GO:0042632">
    <property type="term" value="P:cholesterol homeostasis"/>
    <property type="evidence" value="ECO:0007669"/>
    <property type="project" value="InterPro"/>
</dbReference>
<dbReference type="GO" id="GO:0008203">
    <property type="term" value="P:cholesterol metabolic process"/>
    <property type="evidence" value="ECO:0000314"/>
    <property type="project" value="MGI"/>
</dbReference>
<dbReference type="GO" id="GO:0010878">
    <property type="term" value="P:cholesterol storage"/>
    <property type="evidence" value="ECO:0000316"/>
    <property type="project" value="MGI"/>
</dbReference>
<dbReference type="GO" id="GO:0034379">
    <property type="term" value="P:very-low-density lipoprotein particle assembly"/>
    <property type="evidence" value="ECO:0007669"/>
    <property type="project" value="Ensembl"/>
</dbReference>
<dbReference type="InterPro" id="IPR004299">
    <property type="entry name" value="MBOAT_fam"/>
</dbReference>
<dbReference type="InterPro" id="IPR014371">
    <property type="entry name" value="Oat_ACAT_DAG_ARE"/>
</dbReference>
<dbReference type="InterPro" id="IPR030687">
    <property type="entry name" value="Sterol_acyltranf_meta"/>
</dbReference>
<dbReference type="PANTHER" id="PTHR10408">
    <property type="entry name" value="STEROL O-ACYLTRANSFERASE"/>
    <property type="match status" value="1"/>
</dbReference>
<dbReference type="PANTHER" id="PTHR10408:SF10">
    <property type="entry name" value="STEROL O-ACYLTRANSFERASE 2"/>
    <property type="match status" value="1"/>
</dbReference>
<dbReference type="Pfam" id="PF03062">
    <property type="entry name" value="MBOAT"/>
    <property type="match status" value="1"/>
</dbReference>
<dbReference type="PIRSF" id="PIRSF000439">
    <property type="entry name" value="Oat_ACAT_DAG_ARE"/>
    <property type="match status" value="1"/>
</dbReference>
<dbReference type="PIRSF" id="PIRSF500230">
    <property type="entry name" value="Sterol_acyltranf_ACAT"/>
    <property type="match status" value="1"/>
</dbReference>
<organism>
    <name type="scientific">Mus musculus</name>
    <name type="common">Mouse</name>
    <dbReference type="NCBI Taxonomy" id="10090"/>
    <lineage>
        <taxon>Eukaryota</taxon>
        <taxon>Metazoa</taxon>
        <taxon>Chordata</taxon>
        <taxon>Craniata</taxon>
        <taxon>Vertebrata</taxon>
        <taxon>Euteleostomi</taxon>
        <taxon>Mammalia</taxon>
        <taxon>Eutheria</taxon>
        <taxon>Euarchontoglires</taxon>
        <taxon>Glires</taxon>
        <taxon>Rodentia</taxon>
        <taxon>Myomorpha</taxon>
        <taxon>Muroidea</taxon>
        <taxon>Muridae</taxon>
        <taxon>Murinae</taxon>
        <taxon>Mus</taxon>
        <taxon>Mus</taxon>
    </lineage>
</organism>